<sequence length="2493" mass="277950">MEKVHVDIEEDSPFLRALQRSFPQFEVEAKQVTDNDHANARAFSHLASKLIETEVDPSDTILDIGSAPARRMYSKHKYHCICPMRCAEDPDRLYKYATKLKKNCKEITDKELDKKMKELAAVMSDPDLETETMCLHDDESCRYEGQVAVYQDVYAVDGPTSLYHQANKGVRVAYWIGFDTTPFMFKNLAGAYPSYSTNWADETVLTARNIGLCSSDVMERSRRGMSILRKKYLKPSNNVLFSVGSTIYHEKRDLLRSWHLPSVFHLRGKQNYTCRCETIVSCDGYVVKRIAISPGLYGKPSGYAATMHREGFLCCKVTDTLNGERVSFPVCTYVPATLCDQMTGILATDVSADDAQKLLVGLNQRIVVNGRTQRNTNTMKNYLLPVVAQAFARWAKEYKEDQEDERPLGLRDRQLVMGCCWAFRRHKITSIYKRPDTQTIIKVNSDFHSFVLPRIGSNTLEIGLRTRIRKMLEEHKEPSPLITAEDIQEAKCAADEAKEVREAEELRAALPPLAADFEEPTLEADVDLMLQEAGAGSVETPRGLIKVTSYAGEDKIGSYAVLSPQAVLKSEKLSCIHPLAEQVIVITHSGRKGRYAVEPYHGKVVVPEGHAIPVQDFQALSESATIVYNEREFVNRYLHHIATHGGALNTDEEYYKTVKPSEHDGEYLYDIDRKQCVKKELVTGLGLTGELVDPPFHEFAYESLRTRPAAPYQVPTIGVYGVPGSGKSGIIKSAVTKKDLVVSAKKENCAEIIRDVKKMKGLDVNARTVDSVLLNGCKHPVETLYIDEAFACHAGTLRALIAIIRPKKAVLCGDPKQCGFFNMMCLKVHFNHEICTQVFHKSISRRCTKSVTSVVSTLFYDKRMRTTNPKETKIVIDTTGSTKPKQDDLILTCFRGWVKQLQIDYKGNEIMTAAASQGLTRKGVYAVRYKVNENPLYAPTSEHVNVLLTRTEDRIVWKTLAGDPWIKILTAKYPGNFTATIEEWQAEHDAIMRHILERPDPTDVFQNKANVCWAKALVPVLKTAGIDMTTEQWNTVDYFETDKAHSAEIVLNQLCVRFFGLDLDSGLFSAPTVPLSIRNNHWDNSPSPNMYGLNKEVVRQLSRRYPQLPRAVATGRVYDMNTGTLRNYDPRINLVPVNRRLPHALVLHHNEHPQSDFSSFVSKLKGRTVLVVGEKLSVPGKKVDWLSDQPEATFRARLDLGIPGDVPKYDIVFINVRTPYKYHHYQQCEDHAIKLSMLTKKACLHLNPGGTCVSIGYGYADRASESIIGAIARQFKFSRVCKPKSSHEETEVLFVFIGYDRKARTHNPYKLSSTLTNIYTGSRLHEAGCAPSYHVVRGDIATATEGVIINAANSKGQPGGGVCGALYKKFPESFDLQPIEVGKARLVKGAAKHIIHAVGPNFNKVSEVEGDKQLAEAYESIAKIVNDNNYKSVAIPLLSTGIFSGNKDRLTQSLNHLLTALDTTDADVAIYCRDKKWEMTLKEAVARREAVEEICISDDSSVTEPDAELVRVHPKSSLAGRKGYSTSDGKTFSYLEGTKFHQAAKDIAEINAMWPVATEANEQVCMYILGESMSSIRSKCPVEESEASTPPSTLPCLCIHAMTPERVQRLKASRPEQITVCSSFPLPKYRITGVQKIQCSQPILFSPKVPAYIHPRKYLVETPPVEETPESPAENQSTEGTPEQPALVNVDATRTRMPEPIIIEEEEEDSISLLSDGPTHQVLQVEADIHGSPSVSSSSWSIPHASDFDVDSLSILDTLDGASVTSGAVSAETNSYFARSMEFRARPVPAPRTVFRNPPHPAPRTRTPPLAHSRASSRTSLVSTPPGVNRVITREELEALTPSRAPSRSASRTSLVSNPPGVNRVITREEFEAFVAQQQXRFDAGAYIFSSDTGQGHLQQKSVRQTVLSEVVLERTELEISYAPRLDQEKEELLRKKLQLNPTPANRSRYQSRRVENMKAITARRILQGLGHYLKAEGKVECYRTLHPVPLYSSSVNRAFSSPKVAVEACNAMLKENFPTVASYCIIPEYDAYLDMVDGASCCLDTASFCPAKLRSFPKKHSYLEPTIRSAVPSAIQNTLQNVLAAATKRNCNVTQMRELPVLDSAAFNVECFKKYACNNEYWETFKENPIRLTEENVVNYITKLKGPKAAALFAKTHNLNMLQDIPMDRFVMDLKRDVKVTPGTKHTEERPKVQVIQAADPLATADLCGIHRELVRRLNAVLLPNIHTLFDMSAEDFDAIIAEHFQPGDCVLETDIASFDKSEDDAMALTALMILEDLGVDAELLTLIEAAFGEISSIHLPTKTKFKFGAMMKSGMFLTLFVNTVINIVIASRVLRERLTGSPCAAFIGDDNIVKGVKSDKLMADRCATWLNMEVKIIDAVVGEKAPYFCGGFILCDSVTGTACRVADPLKRLFKLGKPLAVDDEHDDDRRRALHEESTRWNRVGILPELCKAVESRYETVGTSIIVMAMTTLASSVKSFSYLRGAPITLYG</sequence>
<accession>P36328</accession>
<accession>Q52QW0</accession>
<accession>Q8JJT2</accession>
<accession>Q8QKW7</accession>
<accession>Q8UYL4</accession>
<accession>Q911J8</accession>
<accession>Q91KW9</accession>
<name>POLN_EEVVP</name>
<evidence type="ECO:0000250" key="1">
    <source>
        <dbReference type="UniProtKB" id="O90368"/>
    </source>
</evidence>
<evidence type="ECO:0000250" key="2">
    <source>
        <dbReference type="UniProtKB" id="P03317"/>
    </source>
</evidence>
<evidence type="ECO:0000250" key="3">
    <source>
        <dbReference type="UniProtKB" id="P08411"/>
    </source>
</evidence>
<evidence type="ECO:0000250" key="4">
    <source>
        <dbReference type="UniProtKB" id="P27282"/>
    </source>
</evidence>
<evidence type="ECO:0000250" key="5">
    <source>
        <dbReference type="UniProtKB" id="Q8JUX6"/>
    </source>
</evidence>
<evidence type="ECO:0000255" key="6">
    <source>
        <dbReference type="PROSITE-ProRule" id="PRU00490"/>
    </source>
</evidence>
<evidence type="ECO:0000255" key="7">
    <source>
        <dbReference type="PROSITE-ProRule" id="PRU00539"/>
    </source>
</evidence>
<evidence type="ECO:0000255" key="8">
    <source>
        <dbReference type="PROSITE-ProRule" id="PRU00853"/>
    </source>
</evidence>
<evidence type="ECO:0000255" key="9">
    <source>
        <dbReference type="PROSITE-ProRule" id="PRU00990"/>
    </source>
</evidence>
<evidence type="ECO:0000255" key="10">
    <source>
        <dbReference type="PROSITE-ProRule" id="PRU01079"/>
    </source>
</evidence>
<evidence type="ECO:0000256" key="11">
    <source>
        <dbReference type="SAM" id="MobiDB-lite"/>
    </source>
</evidence>
<evidence type="ECO:0000269" key="12">
    <source>
    </source>
</evidence>
<evidence type="ECO:0000269" key="13">
    <source>
    </source>
</evidence>
<evidence type="ECO:0000269" key="14">
    <source>
    </source>
</evidence>
<evidence type="ECO:0000305" key="15"/>
<evidence type="ECO:0007744" key="16">
    <source>
        <dbReference type="PDB" id="3GQE"/>
    </source>
</evidence>
<evidence type="ECO:0007744" key="17">
    <source>
        <dbReference type="PDB" id="3GQO"/>
    </source>
</evidence>
<evidence type="ECO:0007744" key="18">
    <source>
        <dbReference type="PDB" id="5ISN"/>
    </source>
</evidence>
<evidence type="ECO:0007744" key="19">
    <source>
        <dbReference type="PDB" id="5MQX"/>
    </source>
</evidence>
<evidence type="ECO:0007829" key="20">
    <source>
        <dbReference type="PDB" id="3GQE"/>
    </source>
</evidence>
<evidence type="ECO:0007829" key="21">
    <source>
        <dbReference type="PDB" id="5ISN"/>
    </source>
</evidence>
<comment type="function">
    <molecule>Polyprotein P1234</molecule>
    <text evidence="5">Inactive precursor of the viral replicase, which is activated by cleavages carried out by the viral protease nsP2.</text>
</comment>
<comment type="function">
    <molecule>Polyprotein P123</molecule>
    <text evidence="2 15">The early replication complex formed by the polyprotein P123 and nsP4 synthesizes the minus-strand RNAs (antigenome) (By similarity). Polyprotein P123 is a short-lived polyprotein that accumulates during early stage of infection (Probable). As soon P123 is cleaved into mature proteins, the plus-strand RNAs synthesis begins (By similarity).</text>
</comment>
<comment type="function">
    <molecule>Polyprotein P123'</molecule>
    <text evidence="15">The early replication complex formed by the polyprotein P123' and nsP4 synthesizes minus-strand RNAs (antigenome) (Probable). Polyprotein P123' is a short-lived polyprotein that accumulates during early stage of infection (Probable). As soon P123' is cleaved into mature proteins, the plus-strand RNAs synthesis begins (Probable).</text>
</comment>
<comment type="function">
    <molecule>mRNA-capping enzyme nsP1</molecule>
    <text evidence="2 3 5 14 15">Cytoplasmic capping enzyme that catalyzes two virus-specific reactions: methyltransferase and nsP1 guanylyltransferase (PubMed:26041283). mRNA-capping is necessary since all viral RNAs are synthesized in the cytoplasm, and host capping enzymes are restricted to the nucleus (Probable). The enzymatic reaction involves a covalent link between 7-methyl-GMP and nsP1, whereas eukaryotic capping enzymes form a covalent complex only with GMP (Probable). NsP1 capping consists in the following reactions: GTP is first methylated into 7-methyl-GMP and then is covalently linked to nsP1 to form the m7GMp-nsP1 complex from which 7-methyl-GMP complex is transferred to the mRNA to create the cap structure (PubMed:26041283). NsP1 is also needed for the initiation of the minus-strand RNAs synthesis (By similarity). Probably serves as a membrane anchor for the replication complex composed of nsP1-nsP4 (By similarity). Nsp1 is needed for the initiation of the minus-strand RNAs synthesis (By similarity). Palmitoylated nsP1 is remodeling host cell cytoskeleton, and induces filopodium-like structure formation at the surface of the host cell (By similarity).</text>
</comment>
<comment type="function">
    <molecule>Protease nsP2</molecule>
    <text evidence="2 3 4 5">Multifunctional protein whose N-terminus is part of the RNA polymerase complex and displays NTPase, RNA triphosphatase and helicase activities (By similarity). NTPase and RNA triphosphatase are involved in viral RNA capping and helicase keeps a check on the dsRNA replication intermediates (By similarity). The C-terminus harbors a protease that specifically cleaves the polyproteins and releases the mature proteins (By similarity). Required for the shutoff of minus-strand RNAs synthesis (By similarity). Inhibits host translation to ensure maximal viral gene expression and evade host immune response (By similarity).</text>
</comment>
<comment type="function">
    <molecule>Non-structural protein 3</molecule>
    <text evidence="2 4">Seems to be essential for minus-strand RNAs and subgenomic 26S mRNAs synthesis (By similarity). Displays mono-ADP-ribosylhydrolase activity (By similarity). ADP-ribosylation is a post-translational modification that controls various processes of the host cell and the virus probably needs to revert it for optimal viral replication (By similarity). Binds proteins of FXR family and sequesters them into the viral RNA replication complexes thereby inhibiting the formation of host stress granules on viral mRNAs (By similarity). The nsp3-FXR complexes bind viral RNAs and probably orchestrate the assembly of viral replication complexes, thanks to the ability of FXR family members to self-assemble and bind DNA (By similarity).</text>
</comment>
<comment type="function">
    <molecule>Non-structural protein 3'</molecule>
    <text evidence="2 15">Seems to be essential for minus-strand RNAs and subgenomic 26S mRNAs synthesis (By similarity). Displays mono-ADP-ribosylhydrolase activity (Probable). ADP-ribosylation is a post-translational modification that controls various processes of the host cell and the virus probably needs to revert it for optimal viral replication (Probable). Binds proteins of FXR family and sequesters them into the viral RNA replication complexes thereby inhibiting the formation of host stress granules on viral mRNAs (Probable). The nsp3'-FXR complexes bind viral RNAs and probably orchestrate the assembly of viral replication complexes, thanks to the ability of FXR family members to self-assemble and bind DNA (Probable).</text>
</comment>
<comment type="function">
    <molecule>RNA-directed RNA polymerase nsP4</molecule>
    <text evidence="2">RNA dependent RNA polymerase (By similarity). Replicates genomic and antigenomic RNA by recognizing replications specific signals. The early replication complex formed by the polyprotein P123 and nsP4 synthesizes minus-strand RNAs (By similarity). The late replication complex composed of fully processed nsP1-nsP4 is responsible for the production of genomic and subgenomic plus-strand RNAs (By similarity).</text>
</comment>
<comment type="catalytic activity">
    <reaction evidence="14">
        <text>GTP + S-adenosyl-L-methionine = N(7)-methyl-GTP + S-adenosyl-L-homocysteine</text>
        <dbReference type="Rhea" id="RHEA:46948"/>
        <dbReference type="ChEBI" id="CHEBI:37565"/>
        <dbReference type="ChEBI" id="CHEBI:57856"/>
        <dbReference type="ChEBI" id="CHEBI:59789"/>
        <dbReference type="ChEBI" id="CHEBI:87133"/>
    </reaction>
</comment>
<comment type="catalytic activity">
    <reaction evidence="14">
        <text>N(7)-methyl-GTP + L-histidyl-[protein] = N(tele)-(N(7)-methylguanosine 5'-phospho)-L-histidyl-[protein] + diphosphate</text>
        <dbReference type="Rhea" id="RHEA:54792"/>
        <dbReference type="Rhea" id="RHEA-COMP:9745"/>
        <dbReference type="Rhea" id="RHEA-COMP:13995"/>
        <dbReference type="ChEBI" id="CHEBI:29979"/>
        <dbReference type="ChEBI" id="CHEBI:33019"/>
        <dbReference type="ChEBI" id="CHEBI:87133"/>
        <dbReference type="ChEBI" id="CHEBI:138334"/>
    </reaction>
    <physiologicalReaction direction="left-to-right" evidence="14">
        <dbReference type="Rhea" id="RHEA:54793"/>
    </physiologicalReaction>
</comment>
<comment type="catalytic activity">
    <reaction evidence="14">
        <text>N(tele)-(N(7)-methylguanosine 5'-phospho)-L-histidyl-[protein] + a 5'-end diphospho-(purine-ribonucleoside) in mRNA + H(+) = a 5'-end (N(7)-methyl 5'-triphosphoguanosine)-(purine-ribonucleoside) in mRNA + L-histidyl-[protein]</text>
        <dbReference type="Rhea" id="RHEA:54800"/>
        <dbReference type="Rhea" id="RHEA-COMP:9745"/>
        <dbReference type="Rhea" id="RHEA-COMP:12925"/>
        <dbReference type="Rhea" id="RHEA-COMP:13929"/>
        <dbReference type="Rhea" id="RHEA-COMP:13995"/>
        <dbReference type="ChEBI" id="CHEBI:15378"/>
        <dbReference type="ChEBI" id="CHEBI:29979"/>
        <dbReference type="ChEBI" id="CHEBI:133968"/>
        <dbReference type="ChEBI" id="CHEBI:138276"/>
        <dbReference type="ChEBI" id="CHEBI:138334"/>
    </reaction>
</comment>
<comment type="catalytic activity">
    <reaction evidence="3">
        <text>a 5'-end triphospho-ribonucleoside in mRNA + H2O = a 5'-end diphospho-ribonucleoside in mRNA + phosphate + H(+)</text>
        <dbReference type="Rhea" id="RHEA:67004"/>
        <dbReference type="Rhea" id="RHEA-COMP:17164"/>
        <dbReference type="Rhea" id="RHEA-COMP:17165"/>
        <dbReference type="ChEBI" id="CHEBI:15377"/>
        <dbReference type="ChEBI" id="CHEBI:15378"/>
        <dbReference type="ChEBI" id="CHEBI:43474"/>
        <dbReference type="ChEBI" id="CHEBI:167616"/>
        <dbReference type="ChEBI" id="CHEBI:167618"/>
        <dbReference type="EC" id="3.6.1.74"/>
    </reaction>
    <physiologicalReaction direction="left-to-right" evidence="3">
        <dbReference type="Rhea" id="RHEA:67005"/>
    </physiologicalReaction>
</comment>
<comment type="catalytic activity">
    <reaction evidence="5">
        <text>a ribonucleoside 5'-triphosphate + H2O = a ribonucleoside 5'-diphosphate + phosphate + H(+)</text>
        <dbReference type="Rhea" id="RHEA:23680"/>
        <dbReference type="ChEBI" id="CHEBI:15377"/>
        <dbReference type="ChEBI" id="CHEBI:15378"/>
        <dbReference type="ChEBI" id="CHEBI:43474"/>
        <dbReference type="ChEBI" id="CHEBI:57930"/>
        <dbReference type="ChEBI" id="CHEBI:61557"/>
        <dbReference type="EC" id="3.6.1.15"/>
    </reaction>
</comment>
<comment type="catalytic activity">
    <reaction evidence="5">
        <text>ATP + H2O = ADP + phosphate + H(+)</text>
        <dbReference type="Rhea" id="RHEA:13065"/>
        <dbReference type="ChEBI" id="CHEBI:15377"/>
        <dbReference type="ChEBI" id="CHEBI:15378"/>
        <dbReference type="ChEBI" id="CHEBI:30616"/>
        <dbReference type="ChEBI" id="CHEBI:43474"/>
        <dbReference type="ChEBI" id="CHEBI:456216"/>
        <dbReference type="EC" id="3.6.4.13"/>
    </reaction>
</comment>
<comment type="catalytic activity">
    <reaction evidence="7">
        <text>RNA(n) + a ribonucleoside 5'-triphosphate = RNA(n+1) + diphosphate</text>
        <dbReference type="Rhea" id="RHEA:21248"/>
        <dbReference type="Rhea" id="RHEA-COMP:14527"/>
        <dbReference type="Rhea" id="RHEA-COMP:17342"/>
        <dbReference type="ChEBI" id="CHEBI:33019"/>
        <dbReference type="ChEBI" id="CHEBI:61557"/>
        <dbReference type="ChEBI" id="CHEBI:140395"/>
        <dbReference type="EC" id="2.7.7.48"/>
    </reaction>
</comment>
<comment type="catalytic activity">
    <reaction evidence="4">
        <text>4-O-(ADP-D-ribosyl)-L-aspartyl-[protein] + H2O = L-aspartyl-[protein] + ADP-D-ribose + H(+)</text>
        <dbReference type="Rhea" id="RHEA:54428"/>
        <dbReference type="Rhea" id="RHEA-COMP:9867"/>
        <dbReference type="Rhea" id="RHEA-COMP:13832"/>
        <dbReference type="ChEBI" id="CHEBI:15377"/>
        <dbReference type="ChEBI" id="CHEBI:15378"/>
        <dbReference type="ChEBI" id="CHEBI:29961"/>
        <dbReference type="ChEBI" id="CHEBI:57967"/>
        <dbReference type="ChEBI" id="CHEBI:138102"/>
    </reaction>
    <physiologicalReaction direction="left-to-right" evidence="4">
        <dbReference type="Rhea" id="RHEA:54429"/>
    </physiologicalReaction>
</comment>
<comment type="catalytic activity">
    <reaction evidence="4">
        <text>5-O-(ADP-D-ribosyl)-L-glutamyl-[protein] + H2O = L-glutamyl-[protein] + ADP-D-ribose + H(+)</text>
        <dbReference type="Rhea" id="RHEA:58248"/>
        <dbReference type="Rhea" id="RHEA-COMP:10208"/>
        <dbReference type="Rhea" id="RHEA-COMP:15089"/>
        <dbReference type="ChEBI" id="CHEBI:15377"/>
        <dbReference type="ChEBI" id="CHEBI:15378"/>
        <dbReference type="ChEBI" id="CHEBI:29973"/>
        <dbReference type="ChEBI" id="CHEBI:57967"/>
        <dbReference type="ChEBI" id="CHEBI:142540"/>
    </reaction>
    <physiologicalReaction direction="left-to-right" evidence="4">
        <dbReference type="Rhea" id="RHEA:58249"/>
    </physiologicalReaction>
</comment>
<comment type="catalytic activity">
    <reaction evidence="2">
        <text>RNA(n) + ATP = RNA(n)-3'-adenine ribonucleotide + diphosphate</text>
        <dbReference type="Rhea" id="RHEA:11332"/>
        <dbReference type="Rhea" id="RHEA-COMP:14527"/>
        <dbReference type="Rhea" id="RHEA-COMP:17347"/>
        <dbReference type="ChEBI" id="CHEBI:30616"/>
        <dbReference type="ChEBI" id="CHEBI:33019"/>
        <dbReference type="ChEBI" id="CHEBI:140395"/>
        <dbReference type="ChEBI" id="CHEBI:173115"/>
        <dbReference type="EC" id="2.7.7.19"/>
    </reaction>
</comment>
<comment type="catalytic activity">
    <reaction evidence="12">
        <text>ADP-alpha-D-ribose 1''-phosphate + H2O = ADP-D-ribose + phosphate</text>
        <dbReference type="Rhea" id="RHEA:25029"/>
        <dbReference type="ChEBI" id="CHEBI:15377"/>
        <dbReference type="ChEBI" id="CHEBI:43474"/>
        <dbReference type="ChEBI" id="CHEBI:57967"/>
        <dbReference type="ChEBI" id="CHEBI:58753"/>
        <dbReference type="EC" id="3.1.3.84"/>
    </reaction>
    <physiologicalReaction direction="left-to-right" evidence="12">
        <dbReference type="Rhea" id="RHEA:25030"/>
    </physiologicalReaction>
</comment>
<comment type="cofactor">
    <cofactor evidence="2">
        <name>Mg(2+)</name>
        <dbReference type="ChEBI" id="CHEBI:18420"/>
    </cofactor>
    <cofactor evidence="2">
        <name>Mn(2+)</name>
        <dbReference type="ChEBI" id="CHEBI:29035"/>
    </cofactor>
    <text evidence="2">For nsP4 adenylyltransferase activity; Mn(2+) supports catalysis at 60% of the levels observed with Mg(2+).</text>
</comment>
<comment type="cofactor">
    <cofactor evidence="2">
        <name>Mg(2+)</name>
        <dbReference type="ChEBI" id="CHEBI:18420"/>
    </cofactor>
    <text evidence="2">For nsP4 RNA-directed RNA polymerase activity.</text>
</comment>
<comment type="cofactor">
    <cofactor evidence="14">
        <name>Mg(2+)</name>
        <dbReference type="ChEBI" id="CHEBI:18420"/>
    </cofactor>
    <text evidence="14">For nsP1 guanylylation.</text>
</comment>
<comment type="cofactor">
    <cofactor>
        <name>Mg(2+)</name>
        <dbReference type="ChEBI" id="CHEBI:18420"/>
    </cofactor>
    <text evidence="5">For nsP2 RNA triphosphatase activity.</text>
</comment>
<comment type="cofactor">
    <cofactor>
        <name>Mg(2+)</name>
        <dbReference type="ChEBI" id="CHEBI:18420"/>
    </cofactor>
    <text evidence="5">For nsP2 NTPase activity.</text>
</comment>
<comment type="activity regulation">
    <molecule>mRNA-capping enzyme nsP1</molecule>
    <text evidence="14">Inhibited by sinefungin.</text>
</comment>
<comment type="subunit">
    <molecule>mRNA-capping enzyme nsP1</molecule>
    <text evidence="4 5">Interacts with non-structural protein 3 (By similarity). Interacts with RNA-directed RNA polymerase nsP4 (By similarity). Interacts with protease nsP2 (By similarity). interacts with itself (By similarity).</text>
</comment>
<comment type="subunit">
    <molecule>Non-structural protein 3</molecule>
    <text evidence="4 5">Interacts with mRNA-capping enzyme nsP1 (By similarity). Interacts with host DDX1 (By similarity). Interacts with host DDX3 (By similarity). Interacts (via C-terminus) with host FXR1; this interaction inhibits the formation of host stress granules on viral mRNAs and the nsp3-FXR1 complexes bind viral RNAs and probably orchestrate the assembly of viral replication complexes (By similarity). Interacts (via C-terminus) with host FXR2; this interaction inhibits the formation of host stress granules on viral mRNAs and the nsp3-FXR2 complexes bind viral RNAs and probably orchestrate the assembly of viral replication complexes (By similarity). Interacts (via C-terminus) with host FMR1; this interaction inhibits the formation of host stress granules on viral mRNAs and the nsp3-FMR1 complexes bind viral RNAs and probably orchestrate the assembly of viral replication complexes (By similarity).</text>
</comment>
<comment type="subunit">
    <molecule>RNA-directed RNA polymerase nsP4</molecule>
    <text evidence="4 5">Interacts with mRNA-capping enzyme nsP1 (By similarity). Interacts with protease nsP2 (By similarity). interacts with itself (By similarity).</text>
</comment>
<comment type="subunit">
    <molecule>Protease nsP2</molecule>
    <text evidence="4 5">Interacts with RNA-directed RNA polymerase nsP4 (By similarity). Interacts with mRNA-capping enzyme nsP1 (By similarity). Interacts with KPNA1/karyopherin-alpha1; this interaction probably allows the active transport of protease nsP2 into the host nucleus (By similarity).</text>
</comment>
<comment type="subcellular location">
    <molecule>Polyprotein P1234</molecule>
    <subcellularLocation>
        <location evidence="15">Host cytoplasmic vesicle membrane</location>
        <topology evidence="15">Peripheral membrane protein</topology>
    </subcellularLocation>
    <text evidence="15">Part of cytoplasmic vesicles, which are probably formed at the plasma membrane and internalized leading to late endosomal/lysosomal spherules containing the replication complex.</text>
</comment>
<comment type="subcellular location">
    <molecule>Polyprotein P123'</molecule>
    <subcellularLocation>
        <location evidence="15">Host cytoplasmic vesicle membrane</location>
        <topology evidence="15">Peripheral membrane protein</topology>
    </subcellularLocation>
    <text evidence="15">Part of cytoplasmic vesicles, which are probably formed at the plasma membrane and internalized leading to late endosomal/lysosomal spherules containing the replication complex.</text>
</comment>
<comment type="subcellular location">
    <molecule>Polyprotein P123</molecule>
    <subcellularLocation>
        <location evidence="15">Host cytoplasmic vesicle membrane</location>
        <topology evidence="15">Peripheral membrane protein</topology>
    </subcellularLocation>
    <text evidence="15">Part of cytoplasmic vesicles, which are probably formed at the plasma membrane and internalized leading to late endosomal/lysosomal spherules containing the replication complex.</text>
</comment>
<comment type="subcellular location">
    <molecule>mRNA-capping enzyme nsP1</molecule>
    <subcellularLocation>
        <location evidence="3">Host cytoplasmic vesicle membrane</location>
        <topology evidence="3">Lipid-anchor</topology>
    </subcellularLocation>
    <subcellularLocation>
        <location evidence="3">Host cell membrane</location>
        <topology evidence="3">Lipid-anchor</topology>
        <orientation evidence="3">Cytoplasmic side</orientation>
    </subcellularLocation>
    <subcellularLocation>
        <location evidence="3">Host cell projection</location>
        <location evidence="3">Host filopodium</location>
    </subcellularLocation>
    <text evidence="3">In the late phase of infection, the polyprotein is quickly cleaved before localization to cellular membranes. Then a fraction of nsP1 localizes to the inner surface of the plasma membrane and its filopodial extensions. Only the palmitoylated nsP1 localizes to the host filopodia (By similarity). NsP1 is also part of cytoplasmic vesicles, which are probably formed at the plasma membrane and internalized leading to late endosomal/lysosomal spherules containing the replication complex (By similarity).</text>
</comment>
<comment type="subcellular location">
    <molecule>Protease nsP2</molecule>
    <subcellularLocation>
        <location evidence="3">Host cytoplasmic vesicle membrane</location>
        <topology evidence="3">Peripheral membrane protein</topology>
    </subcellularLocation>
    <subcellularLocation>
        <location evidence="4">Host nucleus</location>
    </subcellularLocation>
    <subcellularLocation>
        <location evidence="4">Host cytoplasm</location>
    </subcellularLocation>
    <text evidence="3 4">In the late phase of infection, the polyprotein is quickly cleaved before localization to cellular membranes. Then approximately half of nsP2 is found in the nucleus (By similarity). Shuttles between cytoplasm and nucleus (By similarity). NsP2 is also part of cytoplasmic vesicles, which are probably formed at the plasma membrane and internalized leading to late endosomal/lysosomal spherules containing the replication complex (By similarity).</text>
</comment>
<comment type="subcellular location">
    <molecule>Non-structural protein 3</molecule>
    <subcellularLocation>
        <location evidence="2">Host cytoplasmic vesicle membrane</location>
        <topology evidence="15">Peripheral membrane protein</topology>
    </subcellularLocation>
    <text evidence="2">In the late phase of infection, the polyprotein is quickly cleaved before localization to cellular membranes. Then nsP3 and nsP3' form aggregates in cytoplasm (By similarity). NsP3 is also part of cytoplasmic vesicles, which are probably formed at the plasma membrane and internalized leading to late endosomal/lysosomal spherules containing the replication complex (By similarity).</text>
</comment>
<comment type="subcellular location">
    <molecule>Non-structural protein 3'</molecule>
    <subcellularLocation>
        <location evidence="15">Host cytoplasmic vesicle membrane</location>
        <topology evidence="15">Peripheral membrane protein</topology>
    </subcellularLocation>
    <text evidence="2 15">In the late phase of infection, the polyprotein is quickly cleaved before localization to cellular membranes. Then nsP3 and nsP3' form aggregates in cytoplasm (By similarity). NsP3' is also part of cytoplasmic vesicles, which are probably formed at the plasma membrane and internalized leading to late endosomal/lysosomal spherules containing the replication complex (Probable).</text>
</comment>
<comment type="subcellular location">
    <molecule>RNA-directed RNA polymerase nsP4</molecule>
    <subcellularLocation>
        <location>Host cytoplasmic vesicle membrane</location>
        <topology evidence="3">Peripheral membrane protein</topology>
    </subcellularLocation>
    <text evidence="3">NsP4 is part of cytoplasmic vesicles, which are probably formed at the plasma membrane and internalized leading to late endosomal/lysosomal spherules containing the replication complex.</text>
</comment>
<comment type="domain">
    <molecule>Protease nsP2</molecule>
    <text evidence="4 5">The N-terminus exhibits NTPase and RNA triphosphatase activities and is proposed to have helicase activity, whereas the C-terminus possesses protease activity (By similarity). Contains a nuclear localization signal and a nuclear export signal, these two motifs are probably involved in the shuttling between the cytoplasm and the nucleus of nsP2 (By similarity).</text>
</comment>
<comment type="domain">
    <molecule>Non-structural protein 3'</molecule>
    <text evidence="2 4">In the N-terminus, the macro domain displays a mono-ADP-ribosylhydrolase activity (By similarity). The central part has a zinc-binding function (By similarity). The C-terminus contains two approximate repeats necessary and sufficient for formation of the nsP3'/FXR complex (By similarity).</text>
</comment>
<comment type="domain">
    <molecule>Non-structural protein 3</molecule>
    <text evidence="2 4">In the N-terminus, the macro domain displays a mono-ADP-ribosylhydrolase activity (By similarity). The central part has a zinc-binding function (By similarity). The C-terminus contains two approximate repeats necessary and sufficient for formation of the nsP3/FXR complex (By similarity).</text>
</comment>
<comment type="PTM">
    <molecule>Polyprotein P1234</molecule>
    <text evidence="2">Specific enzymatic cleavages in vivo yield mature proteins (By similarity). The processing of the polyprotein is temporally regulated (By similarity). In early stages (1.7 hpi), P1234 is first cleaved in trans through its nsP2 protease activity, releasing P123' and nsP4, which associate to form the early replication complex (By similarity). At the same time, P1234 is also cut at the nsP1/nsP2 site early in infection but with lower efficiency (By similarity). After replication of the viral minus-strand RNAs (4 hpi), the polyproteins are cut at the nsP1/nsP2 and nsP2/nsP3 sites very efficiently, preventing accumulation of P123' and P1234 and allowing the formation of the late replication complex (By similarity). NsP3'/nsP4 site is not cleaved anymore and P34 is produced rather than nsP4 (By similarity).</text>
</comment>
<comment type="PTM">
    <molecule>Polyprotein P123</molecule>
    <text evidence="2">Specific enzymatic cleavages in vivo yield mature proteins (By similarity). The processing of the polyprotein is temporally regulated (By similarity). In early stages (1.7 hpi), P123 is cleaved at the nsP1/nsP2 site with low efficiency (By similarity). After replication of the viral minus-strand RNAs (4 hpi), the polyproteins are cut at the nsP1/nsP2 and nsP2/nsP3 sites very efficiently, preventing accumulation of P123 and allowing the formation of the late replication complex (By similarity).</text>
</comment>
<comment type="PTM">
    <molecule>Polyprotein P123'</molecule>
    <text evidence="2">Specific enzymatic cleavages in vivo yield mature proteins (By similarity). The processing of the polyprotein is temporally regulated (By similarity). In early stages (1.7 hpi), P123' is cleaved at the nsP1/nsP2 site with low efficiency (By similarity). After replication of the viral minus-strand RNAs (4 hpi), the polyproteins are cut at the nsP1/nsP2 and nsP2/nsP3 sites very efficiently, preventing accumulation of P123' and allowing the formation of the late replication complex (By similarity).</text>
</comment>
<comment type="PTM">
    <molecule>mRNA-capping enzyme nsP1</molecule>
    <text evidence="2">Palmitoylated by host palmitoyltransferases ZDHHC2 and ZDHHC19.</text>
</comment>
<comment type="PTM">
    <molecule>Non-structural protein 3</molecule>
    <text evidence="3">Phosphorylated by host on serines and threonines.</text>
</comment>
<comment type="PTM">
    <molecule>Non-structural protein 3'</molecule>
    <text evidence="3">Phosphorylated by host on serines and threonines.</text>
</comment>
<comment type="PTM">
    <molecule>RNA-directed RNA polymerase nsP4</molecule>
    <text evidence="2">Ubiquitinated; targets the protein for rapid degradation via the ubiquitin system (By similarity). Nsp4 is present in extremely low quantities due to low frequency of translation through the amber stop-codon and the degradation by the ubiquitin pathway (By similarity).</text>
</comment>
<comment type="miscellaneous">
    <text evidence="2">Viral replication produces dsRNA in the late phase of infection, resulting in a strong activation of host EIF2AK2/PKR, leading to almost complete phosphorylation of EIF2A (By similarity). This inactivates completely cellular translation initiation, resulting shutoff of host proteins synthesis (By similarity). However, phosphorylation of EIF2A is probably not the only mechanism responsible for the host translation shutoff (By similarity). The viral translation can still occur normally because it relies on a hairpin structure in the coding region of sgRNA and is EIF2A-, EIF2D-, EIF4G- EIF4A-independent (By similarity).</text>
</comment>
<comment type="miscellaneous">
    <molecule>Polyprotein P1234</molecule>
    <text evidence="1 2">The genome codes for P123, but readthrough of a terminator codon UGA occurs between the codons for Gln-1879 and Arg-1881 giving rise to P1234 (By similarity). P1234 is cleaved quickly by nsP2 into P123' and nsP4 (By similarity). Further processing of p123' gives nsP1, nsP2 and nsP3' which is 6 amino acids longer than nsP3 since the cleavage site is after the readthrough (By similarity). This unusual molecular mechanism ensures that few nsP4 are produced compared to other non-structural proteins (By similarity). Mutant viruses with no alternative termination site grow significantly slower than wild-type virus (By similarity). The opal termination codon is frequently mutated to a sense codon on passage in cell culture (By similarity). The presence of the opal codon may be a requirement for viral maintenance in both vertebrate and invertebrate hosts and a selective advantage may be conferred in cell culture for the sense codon (By similarity).</text>
</comment>
<protein>
    <recommendedName>
        <fullName>Polyprotein P1234</fullName>
        <shortName>P1234</shortName>
    </recommendedName>
    <alternativeName>
        <fullName>Non-structural polyprotein</fullName>
    </alternativeName>
    <component>
        <recommendedName>
            <fullName>Polyprotein P123'</fullName>
            <shortName>P123'</shortName>
        </recommendedName>
    </component>
    <component>
        <recommendedName>
            <fullName>Polyprotein P123</fullName>
            <shortName>P123</shortName>
        </recommendedName>
    </component>
    <component>
        <recommendedName>
            <fullName>mRNA-capping enzyme nsP1</fullName>
            <ecNumber evidence="14">2.1.1.-</ecNumber>
            <ecNumber evidence="14">2.7.7.-</ecNumber>
        </recommendedName>
        <alternativeName>
            <fullName>Non-structural protein 1</fullName>
        </alternativeName>
    </component>
    <component>
        <recommendedName>
            <fullName>Protease nsP2</fullName>
            <ecNumber evidence="4">3.4.22.-</ecNumber>
            <ecNumber evidence="5">3.6.1.15</ecNumber>
            <ecNumber evidence="3">3.6.1.74</ecNumber>
            <ecNumber evidence="5">3.6.4.13</ecNumber>
        </recommendedName>
        <alternativeName>
            <fullName>Non-structural protein 2</fullName>
            <shortName>nsP2</shortName>
        </alternativeName>
    </component>
    <component>
        <recommendedName>
            <fullName>Non-structural protein 3'</fullName>
            <shortName>nsP3'</shortName>
            <ecNumber evidence="4">3.1.3.84</ecNumber>
        </recommendedName>
    </component>
    <component>
        <recommendedName>
            <fullName>Non-structural protein 3</fullName>
            <shortName>nsP3</shortName>
            <ecNumber evidence="4">3.1.3.84</ecNumber>
        </recommendedName>
    </component>
    <component>
        <recommendedName>
            <fullName>RNA-directed RNA polymerase nsP4</fullName>
            <ecNumber evidence="2">2.7.7.19</ecNumber>
            <ecNumber evidence="7">2.7.7.48</ecNumber>
        </recommendedName>
        <alternativeName>
            <fullName>Non-structural protein 4</fullName>
            <shortName>nsP4</shortName>
        </alternativeName>
    </component>
</protein>
<organismHost>
    <name type="scientific">Bos taurus</name>
    <name type="common">Bovine</name>
    <dbReference type="NCBI Taxonomy" id="9913"/>
</organismHost>
<organismHost>
    <name type="scientific">Didelphis marsupialis</name>
    <name type="common">Southern opossum</name>
    <dbReference type="NCBI Taxonomy" id="9268"/>
</organismHost>
<organismHost>
    <name type="scientific">Equus asinus</name>
    <name type="common">Donkey</name>
    <name type="synonym">Equus africanus asinus</name>
    <dbReference type="NCBI Taxonomy" id="9793"/>
</organismHost>
<organismHost>
    <name type="scientific">Equus caballus</name>
    <name type="common">Horse</name>
    <dbReference type="NCBI Taxonomy" id="9796"/>
</organismHost>
<organismHost>
    <name type="scientific">Homo sapiens</name>
    <name type="common">Human</name>
    <dbReference type="NCBI Taxonomy" id="9606"/>
</organismHost>
<organismHost>
    <name type="scientific">Melanoconion</name>
    <dbReference type="NCBI Taxonomy" id="53535"/>
</organismHost>
<organismHost>
    <name type="scientific">Philander opossum</name>
    <name type="common">Gray four-eyed opossum</name>
    <dbReference type="NCBI Taxonomy" id="9272"/>
</organismHost>
<organismHost>
    <name type="scientific">Proechimys</name>
    <dbReference type="NCBI Taxonomy" id="10162"/>
</organismHost>
<organismHost>
    <name type="scientific">Sigmodon hispidus</name>
    <name type="common">Hispid cotton rat</name>
    <dbReference type="NCBI Taxonomy" id="42415"/>
</organismHost>
<feature type="chain" id="PRO_0000308390" description="Polyprotein P1234">
    <location>
        <begin position="1"/>
        <end position="2492"/>
    </location>
</feature>
<feature type="chain" id="PRO_0000228767" description="Polyprotein P123'">
    <location>
        <begin position="1"/>
        <end position="1886"/>
    </location>
</feature>
<feature type="chain" id="PRO_0000228768" description="Polyprotein P123">
    <location>
        <begin position="1"/>
        <end position="1879"/>
    </location>
</feature>
<feature type="chain" id="PRO_0000041204" description="mRNA-capping enzyme nsP1">
    <location>
        <begin position="1"/>
        <end position="535"/>
    </location>
</feature>
<feature type="chain" id="PRO_0000041205" description="Protease nsP2">
    <location>
        <begin position="536"/>
        <end position="1329"/>
    </location>
</feature>
<feature type="chain" id="PRO_0000228769" description="Non-structural protein 3'">
    <location>
        <begin position="1330"/>
        <end position="1886"/>
    </location>
</feature>
<feature type="chain" id="PRO_0000041206" description="Non-structural protein 3">
    <location>
        <begin position="1330"/>
        <end position="1879"/>
    </location>
</feature>
<feature type="chain" id="PRO_0000041207" description="RNA-directed RNA polymerase nsP4">
    <location>
        <begin position="1887"/>
        <end position="2493"/>
    </location>
</feature>
<feature type="domain" description="Alphavirus-like MT" evidence="10">
    <location>
        <begin position="28"/>
        <end position="259"/>
    </location>
</feature>
<feature type="domain" description="(+)RNA virus helicase ATP-binding" evidence="9">
    <location>
        <begin position="690"/>
        <end position="841"/>
    </location>
</feature>
<feature type="domain" description="(+)RNA virus helicase C-terminal" evidence="9">
    <location>
        <begin position="842"/>
        <end position="990"/>
    </location>
</feature>
<feature type="domain" description="Peptidase C9" evidence="8">
    <location>
        <begin position="1003"/>
        <end position="1322"/>
    </location>
</feature>
<feature type="domain" description="Macro" evidence="6 13">
    <location>
        <begin position="1330"/>
        <end position="1489"/>
    </location>
</feature>
<feature type="repeat" description="1" evidence="4">
    <location>
        <begin position="1818"/>
        <end position="1839"/>
    </location>
</feature>
<feature type="repeat" description="2" evidence="4">
    <location>
        <begin position="1852"/>
        <end position="1873"/>
    </location>
</feature>
<feature type="domain" description="RdRp catalytic" evidence="7">
    <location>
        <begin position="2250"/>
        <end position="2365"/>
    </location>
</feature>
<feature type="region of interest" description="NsP1 membrane-binding" evidence="3">
    <location>
        <begin position="244"/>
        <end position="263"/>
    </location>
</feature>
<feature type="region of interest" description="Nucleolus localization signal" evidence="3">
    <location>
        <begin position="1004"/>
        <end position="1023"/>
    </location>
</feature>
<feature type="region of interest" description="Disordered" evidence="11">
    <location>
        <begin position="1664"/>
        <end position="1684"/>
    </location>
</feature>
<feature type="region of interest" description="Disordered" evidence="11">
    <location>
        <begin position="1790"/>
        <end position="1826"/>
    </location>
</feature>
<feature type="region of interest" description="2 X 21 AA approximate repeats, binding to host FXR family members" evidence="4">
    <location>
        <begin position="1818"/>
        <end position="1873"/>
    </location>
</feature>
<feature type="short sequence motif" description="Nuclear export signal" evidence="4">
    <location>
        <begin position="1056"/>
        <end position="1065"/>
    </location>
</feature>
<feature type="short sequence motif" description="Nuclear localization signal" evidence="4">
    <location>
        <begin position="1179"/>
        <end position="1183"/>
    </location>
</feature>
<feature type="compositionally biased region" description="Polar residues" evidence="11">
    <location>
        <begin position="1814"/>
        <end position="1823"/>
    </location>
</feature>
<feature type="active site" description="For cysteine protease nsP2 activity" evidence="8">
    <location>
        <position position="1012"/>
    </location>
</feature>
<feature type="active site" description="For cysteine protease nsP2 activity" evidence="8">
    <location>
        <position position="1081"/>
    </location>
</feature>
<feature type="binding site" evidence="9">
    <location>
        <begin position="721"/>
        <end position="728"/>
    </location>
    <ligand>
        <name>a ribonucleoside 5'-triphosphate</name>
        <dbReference type="ChEBI" id="CHEBI:61557"/>
    </ligand>
</feature>
<feature type="binding site" evidence="12">
    <location>
        <position position="1339"/>
    </location>
    <ligand>
        <name>ADP-D-ribose</name>
        <dbReference type="ChEBI" id="CHEBI:57967"/>
    </ligand>
</feature>
<feature type="binding site" evidence="5">
    <location>
        <position position="1353"/>
    </location>
    <ligand>
        <name>ADP-D-ribose</name>
        <dbReference type="ChEBI" id="CHEBI:57967"/>
    </ligand>
</feature>
<feature type="binding site" evidence="5">
    <location>
        <position position="1361"/>
    </location>
    <ligand>
        <name>ADP-D-ribose</name>
        <dbReference type="ChEBI" id="CHEBI:57967"/>
    </ligand>
</feature>
<feature type="binding site" evidence="12">
    <location>
        <position position="1441"/>
    </location>
    <ligand>
        <name>ADP-D-ribose</name>
        <dbReference type="ChEBI" id="CHEBI:57967"/>
    </ligand>
</feature>
<feature type="binding site" evidence="12">
    <location>
        <position position="1442"/>
    </location>
    <ligand>
        <name>ADP-D-ribose</name>
        <dbReference type="ChEBI" id="CHEBI:57967"/>
    </ligand>
</feature>
<feature type="binding site" evidence="12">
    <location>
        <position position="1443"/>
    </location>
    <ligand>
        <name>ADP-D-ribose</name>
        <dbReference type="ChEBI" id="CHEBI:57967"/>
    </ligand>
</feature>
<feature type="binding site" evidence="2">
    <location>
        <position position="1596"/>
    </location>
    <ligand>
        <name>Zn(2+)</name>
        <dbReference type="ChEBI" id="CHEBI:29105"/>
    </ligand>
</feature>
<feature type="binding site" evidence="2">
    <location>
        <position position="1598"/>
    </location>
    <ligand>
        <name>Zn(2+)</name>
        <dbReference type="ChEBI" id="CHEBI:29105"/>
    </ligand>
</feature>
<feature type="binding site" evidence="2">
    <location>
        <position position="1621"/>
    </location>
    <ligand>
        <name>Zn(2+)</name>
        <dbReference type="ChEBI" id="CHEBI:29105"/>
    </ligand>
</feature>
<feature type="binding site" evidence="2">
    <location>
        <position position="1639"/>
    </location>
    <ligand>
        <name>Zn(2+)</name>
        <dbReference type="ChEBI" id="CHEBI:29105"/>
    </ligand>
</feature>
<feature type="site" description="Involved in the phosphoramide link with 7-methyl-GMP" evidence="4">
    <location>
        <position position="37"/>
    </location>
</feature>
<feature type="site" description="Cleavage; by protease nsP2" evidence="2">
    <location>
        <begin position="535"/>
        <end position="536"/>
    </location>
</feature>
<feature type="site" description="Cleavage; by protease nsP2" evidence="2">
    <location>
        <begin position="1329"/>
        <end position="1330"/>
    </location>
</feature>
<feature type="site" description="Cleavage; by protease nsP2" evidence="5">
    <location>
        <begin position="1886"/>
        <end position="1887"/>
    </location>
</feature>
<feature type="lipid moiety-binding region" description="S-palmitoyl cysteine; by host" evidence="5">
    <location>
        <position position="419"/>
    </location>
</feature>
<feature type="sequence variant" description="In strain: 3908, 6119, 254934, PMCHo5 and V198.">
    <original>V</original>
    <variation>E</variation>
    <location>
        <position position="875"/>
    </location>
</feature>
<feature type="sequence variant" description="In strain: 3908, 6119, 254934, PMCHo5 and V198.">
    <original>I</original>
    <variation>T</variation>
    <location>
        <position position="968"/>
    </location>
</feature>
<feature type="sequence variant" description="In strain: 3908, 6119, 254934, PMCHo5 and V198.">
    <original>AA</original>
    <variation>VT</variation>
    <location>
        <begin position="1390"/>
        <end position="1391"/>
    </location>
</feature>
<feature type="sequence variant" description="In strain: PMCHo5 and V198.">
    <original>GAV</original>
    <variation>EAA</variation>
    <location>
        <begin position="1767"/>
        <end position="1769"/>
    </location>
</feature>
<feature type="sequence variant" description="In strain: 3908, 6119 and 254934.">
    <original>G</original>
    <variation>E</variation>
    <location>
        <position position="1767"/>
    </location>
</feature>
<feature type="sequence variant" description="In strain: V198.">
    <original>P</original>
    <variation>S</variation>
    <location>
        <position position="1809"/>
    </location>
</feature>
<feature type="sequence variant" description="In strain: 254934.">
    <original>V</original>
    <variation>I</variation>
    <location>
        <position position="2094"/>
    </location>
</feature>
<feature type="sequence variant" description="In strain: 3908, 6119, 254934, PMCHo5 and V198.">
    <original>D</original>
    <variation>Y</variation>
    <location>
        <position position="2207"/>
    </location>
</feature>
<feature type="sequence variant" description="In strain: V198.">
    <original>V</original>
    <variation>A</variation>
    <location>
        <position position="2423"/>
    </location>
</feature>
<feature type="strand" evidence="20">
    <location>
        <begin position="1332"/>
        <end position="1338"/>
    </location>
</feature>
<feature type="helix" evidence="20">
    <location>
        <begin position="1340"/>
        <end position="1342"/>
    </location>
</feature>
<feature type="strand" evidence="20">
    <location>
        <begin position="1345"/>
        <end position="1352"/>
    </location>
</feature>
<feature type="helix" evidence="21">
    <location>
        <begin position="1353"/>
        <end position="1355"/>
    </location>
</feature>
<feature type="helix" evidence="20">
    <location>
        <begin position="1361"/>
        <end position="1363"/>
    </location>
</feature>
<feature type="helix" evidence="20">
    <location>
        <begin position="1365"/>
        <end position="1369"/>
    </location>
</feature>
<feature type="helix" evidence="20">
    <location>
        <begin position="1371"/>
        <end position="1373"/>
    </location>
</feature>
<feature type="strand" evidence="20">
    <location>
        <begin position="1384"/>
        <end position="1387"/>
    </location>
</feature>
<feature type="strand" evidence="20">
    <location>
        <begin position="1394"/>
        <end position="1398"/>
    </location>
</feature>
<feature type="turn" evidence="20">
    <location>
        <begin position="1402"/>
        <end position="1404"/>
    </location>
</feature>
<feature type="helix" evidence="20">
    <location>
        <begin position="1407"/>
        <end position="1427"/>
    </location>
</feature>
<feature type="strand" evidence="20">
    <location>
        <begin position="1431"/>
        <end position="1436"/>
    </location>
</feature>
<feature type="strand" evidence="21">
    <location>
        <begin position="1439"/>
        <end position="1441"/>
    </location>
</feature>
<feature type="turn" evidence="21">
    <location>
        <begin position="1442"/>
        <end position="1444"/>
    </location>
</feature>
<feature type="strand" evidence="21">
    <location>
        <begin position="1445"/>
        <end position="1447"/>
    </location>
</feature>
<feature type="helix" evidence="20">
    <location>
        <begin position="1450"/>
        <end position="1461"/>
    </location>
</feature>
<feature type="strand" evidence="20">
    <location>
        <begin position="1467"/>
        <end position="1473"/>
    </location>
</feature>
<feature type="helix" evidence="20">
    <location>
        <begin position="1475"/>
        <end position="1487"/>
    </location>
</feature>
<dbReference type="EC" id="2.1.1.-" evidence="14"/>
<dbReference type="EC" id="2.7.7.-" evidence="14"/>
<dbReference type="EC" id="3.4.22.-" evidence="4"/>
<dbReference type="EC" id="3.6.1.15" evidence="5"/>
<dbReference type="EC" id="3.6.1.74" evidence="3"/>
<dbReference type="EC" id="3.6.4.13" evidence="5"/>
<dbReference type="EC" id="3.1.3.84" evidence="4"/>
<dbReference type="EC" id="2.7.7.19" evidence="2"/>
<dbReference type="EC" id="2.7.7.48" evidence="7"/>
<dbReference type="EMBL" id="L04653">
    <property type="protein sequence ID" value="AAC19318.1"/>
    <property type="status" value="ALT_SEQ"/>
    <property type="molecule type" value="Genomic_RNA"/>
</dbReference>
<dbReference type="EMBL" id="L04653">
    <property type="protein sequence ID" value="AAC19320.1"/>
    <property type="molecule type" value="Genomic_RNA"/>
</dbReference>
<dbReference type="EMBL" id="U55347">
    <property type="protein sequence ID" value="AAM28637.1"/>
    <property type="molecule type" value="Genomic_RNA"/>
</dbReference>
<dbReference type="EMBL" id="AF375051">
    <property type="protein sequence ID" value="AAK66989.1"/>
    <property type="molecule type" value="Genomic_RNA"/>
</dbReference>
<dbReference type="EMBL" id="U55350">
    <property type="protein sequence ID" value="AAM28638.1"/>
    <property type="molecule type" value="Genomic_RNA"/>
</dbReference>
<dbReference type="EMBL" id="AY986475">
    <property type="protein sequence ID" value="AAY16369.1"/>
    <property type="molecule type" value="Genomic_RNA"/>
</dbReference>
<dbReference type="EMBL" id="AY973944">
    <property type="protein sequence ID" value="AAY16003.1"/>
    <property type="molecule type" value="Genomic_RNA"/>
</dbReference>
<dbReference type="EMBL" id="U55345">
    <property type="protein sequence ID" value="AAM28636.1"/>
    <property type="molecule type" value="Genomic_RNA"/>
</dbReference>
<dbReference type="EMBL" id="U55342">
    <property type="protein sequence ID" value="AAL61965.1"/>
    <property type="molecule type" value="Genomic_RNA"/>
</dbReference>
<dbReference type="PIR" id="A44213">
    <property type="entry name" value="A44213"/>
</dbReference>
<dbReference type="RefSeq" id="NP_040822.1">
    <property type="nucleotide sequence ID" value="NC_001449.1"/>
</dbReference>
<dbReference type="RefSeq" id="NP_040823.1">
    <property type="nucleotide sequence ID" value="NC_001449.1"/>
</dbReference>
<dbReference type="PDB" id="3GQE">
    <property type="method" value="X-ray"/>
    <property type="resolution" value="2.30 A"/>
    <property type="chains" value="A/B=1330-1489"/>
</dbReference>
<dbReference type="PDB" id="3GQO">
    <property type="method" value="X-ray"/>
    <property type="resolution" value="2.60 A"/>
    <property type="chains" value="A/B/C/D=1330-1489"/>
</dbReference>
<dbReference type="PDB" id="5ISN">
    <property type="method" value="NMR"/>
    <property type="chains" value="A=1330-1489"/>
</dbReference>
<dbReference type="PDB" id="5MQX">
    <property type="method" value="NMR"/>
    <property type="chains" value="A=1330-1489"/>
</dbReference>
<dbReference type="PDBsum" id="3GQE"/>
<dbReference type="PDBsum" id="3GQO"/>
<dbReference type="PDBsum" id="5ISN"/>
<dbReference type="PDBsum" id="5MQX"/>
<dbReference type="SMR" id="P36328"/>
<dbReference type="IntAct" id="P36328">
    <property type="interactions" value="1"/>
</dbReference>
<dbReference type="MEROPS" id="C09.002"/>
<dbReference type="GeneID" id="2652923"/>
<dbReference type="GeneID" id="2652925"/>
<dbReference type="KEGG" id="vg:2652923"/>
<dbReference type="EvolutionaryTrace" id="P36328"/>
<dbReference type="Proteomes" id="UP000008658">
    <property type="component" value="Segment"/>
</dbReference>
<dbReference type="Proteomes" id="UP000110878">
    <property type="component" value="Genome"/>
</dbReference>
<dbReference type="Proteomes" id="UP000125491">
    <property type="component" value="Genome"/>
</dbReference>
<dbReference type="Proteomes" id="UP000143596">
    <property type="component" value="Genome"/>
</dbReference>
<dbReference type="Proteomes" id="UP000166022">
    <property type="component" value="Genome"/>
</dbReference>
<dbReference type="Proteomes" id="UP000171441">
    <property type="component" value="Genome"/>
</dbReference>
<dbReference type="Proteomes" id="UP000173580">
    <property type="component" value="Genome"/>
</dbReference>
<dbReference type="Proteomes" id="UP000180662">
    <property type="component" value="Segment"/>
</dbReference>
<dbReference type="GO" id="GO:0044162">
    <property type="term" value="C:host cell cytoplasmic vesicle membrane"/>
    <property type="evidence" value="ECO:0007669"/>
    <property type="project" value="UniProtKB-SubCell"/>
</dbReference>
<dbReference type="GO" id="GO:0044176">
    <property type="term" value="C:host cell filopodium"/>
    <property type="evidence" value="ECO:0007669"/>
    <property type="project" value="UniProtKB-SubCell"/>
</dbReference>
<dbReference type="GO" id="GO:0042025">
    <property type="term" value="C:host cell nucleus"/>
    <property type="evidence" value="ECO:0007669"/>
    <property type="project" value="UniProtKB-SubCell"/>
</dbReference>
<dbReference type="GO" id="GO:0020002">
    <property type="term" value="C:host cell plasma membrane"/>
    <property type="evidence" value="ECO:0007669"/>
    <property type="project" value="UniProtKB-SubCell"/>
</dbReference>
<dbReference type="GO" id="GO:0016020">
    <property type="term" value="C:membrane"/>
    <property type="evidence" value="ECO:0007669"/>
    <property type="project" value="UniProtKB-KW"/>
</dbReference>
<dbReference type="GO" id="GO:0005524">
    <property type="term" value="F:ATP binding"/>
    <property type="evidence" value="ECO:0007669"/>
    <property type="project" value="UniProtKB-KW"/>
</dbReference>
<dbReference type="GO" id="GO:0016887">
    <property type="term" value="F:ATP hydrolysis activity"/>
    <property type="evidence" value="ECO:0007669"/>
    <property type="project" value="RHEA"/>
</dbReference>
<dbReference type="GO" id="GO:0008234">
    <property type="term" value="F:cysteine-type peptidase activity"/>
    <property type="evidence" value="ECO:0007669"/>
    <property type="project" value="UniProtKB-KW"/>
</dbReference>
<dbReference type="GO" id="GO:0005525">
    <property type="term" value="F:GTP binding"/>
    <property type="evidence" value="ECO:0007669"/>
    <property type="project" value="UniProtKB-KW"/>
</dbReference>
<dbReference type="GO" id="GO:0046872">
    <property type="term" value="F:metal ion binding"/>
    <property type="evidence" value="ECO:0007669"/>
    <property type="project" value="UniProtKB-KW"/>
</dbReference>
<dbReference type="GO" id="GO:0140818">
    <property type="term" value="F:mRNA 5'-triphosphate monophosphatase activity"/>
    <property type="evidence" value="ECO:0007669"/>
    <property type="project" value="RHEA"/>
</dbReference>
<dbReference type="GO" id="GO:0008174">
    <property type="term" value="F:mRNA methyltransferase activity"/>
    <property type="evidence" value="ECO:0007669"/>
    <property type="project" value="InterPro"/>
</dbReference>
<dbReference type="GO" id="GO:1990817">
    <property type="term" value="F:poly(A) RNA polymerase activity"/>
    <property type="evidence" value="ECO:0007669"/>
    <property type="project" value="UniProtKB-EC"/>
</dbReference>
<dbReference type="GO" id="GO:0004651">
    <property type="term" value="F:polynucleotide 5'-phosphatase activity"/>
    <property type="evidence" value="ECO:0007669"/>
    <property type="project" value="UniProtKB-EC"/>
</dbReference>
<dbReference type="GO" id="GO:0003723">
    <property type="term" value="F:RNA binding"/>
    <property type="evidence" value="ECO:0007669"/>
    <property type="project" value="UniProtKB-KW"/>
</dbReference>
<dbReference type="GO" id="GO:0003724">
    <property type="term" value="F:RNA helicase activity"/>
    <property type="evidence" value="ECO:0007669"/>
    <property type="project" value="UniProtKB-EC"/>
</dbReference>
<dbReference type="GO" id="GO:0003968">
    <property type="term" value="F:RNA-directed RNA polymerase activity"/>
    <property type="evidence" value="ECO:0007669"/>
    <property type="project" value="UniProtKB-KW"/>
</dbReference>
<dbReference type="GO" id="GO:0006370">
    <property type="term" value="P:7-methylguanosine mRNA capping"/>
    <property type="evidence" value="ECO:0007669"/>
    <property type="project" value="UniProtKB-KW"/>
</dbReference>
<dbReference type="GO" id="GO:0006351">
    <property type="term" value="P:DNA-templated transcription"/>
    <property type="evidence" value="ECO:0007669"/>
    <property type="project" value="InterPro"/>
</dbReference>
<dbReference type="GO" id="GO:0032259">
    <property type="term" value="P:methylation"/>
    <property type="evidence" value="ECO:0007669"/>
    <property type="project" value="UniProtKB-KW"/>
</dbReference>
<dbReference type="GO" id="GO:0016556">
    <property type="term" value="P:mRNA modification"/>
    <property type="evidence" value="ECO:0007669"/>
    <property type="project" value="InterPro"/>
</dbReference>
<dbReference type="GO" id="GO:0006508">
    <property type="term" value="P:proteolysis"/>
    <property type="evidence" value="ECO:0007669"/>
    <property type="project" value="UniProtKB-KW"/>
</dbReference>
<dbReference type="GO" id="GO:0039657">
    <property type="term" value="P:symbiont-mediated suppression of host gene expression"/>
    <property type="evidence" value="ECO:0007669"/>
    <property type="project" value="UniProtKB-KW"/>
</dbReference>
<dbReference type="GO" id="GO:0039523">
    <property type="term" value="P:symbiont-mediated suppression of host mRNA transcription via inhibition of RNA polymerase II activity"/>
    <property type="evidence" value="ECO:0007669"/>
    <property type="project" value="UniProtKB-KW"/>
</dbReference>
<dbReference type="GO" id="GO:0039694">
    <property type="term" value="P:viral RNA genome replication"/>
    <property type="evidence" value="ECO:0007669"/>
    <property type="project" value="InterPro"/>
</dbReference>
<dbReference type="CDD" id="cd21557">
    <property type="entry name" value="Macro_X_Nsp3-like"/>
    <property type="match status" value="1"/>
</dbReference>
<dbReference type="CDD" id="cd23250">
    <property type="entry name" value="Togaviridae_RdRp"/>
    <property type="match status" value="1"/>
</dbReference>
<dbReference type="FunFam" id="3.40.220.10:FF:000015">
    <property type="entry name" value="Polyprotein P1234"/>
    <property type="match status" value="1"/>
</dbReference>
<dbReference type="FunFam" id="3.40.50.300:FF:001403">
    <property type="entry name" value="Polyprotein P1234"/>
    <property type="match status" value="1"/>
</dbReference>
<dbReference type="FunFam" id="3.40.50.300:FF:001415">
    <property type="entry name" value="Polyprotein P1234"/>
    <property type="match status" value="1"/>
</dbReference>
<dbReference type="Gene3D" id="3.90.70.110">
    <property type="entry name" value="Alphavirus nsP2 protease domain"/>
    <property type="match status" value="1"/>
</dbReference>
<dbReference type="Gene3D" id="3.40.220.10">
    <property type="entry name" value="Leucine Aminopeptidase, subunit E, domain 1"/>
    <property type="match status" value="1"/>
</dbReference>
<dbReference type="Gene3D" id="3.40.50.300">
    <property type="entry name" value="P-loop containing nucleotide triphosphate hydrolases"/>
    <property type="match status" value="2"/>
</dbReference>
<dbReference type="Gene3D" id="3.40.50.150">
    <property type="entry name" value="Vaccinia Virus protein VP39"/>
    <property type="match status" value="1"/>
</dbReference>
<dbReference type="InterPro" id="IPR027351">
    <property type="entry name" value="(+)RNA_virus_helicase_core_dom"/>
</dbReference>
<dbReference type="InterPro" id="IPR002588">
    <property type="entry name" value="Alphavirus-like_MT_dom"/>
</dbReference>
<dbReference type="InterPro" id="IPR002620">
    <property type="entry name" value="Alphavirus_nsp2pro"/>
</dbReference>
<dbReference type="InterPro" id="IPR044936">
    <property type="entry name" value="Alphavirus_nsp2pro_sf"/>
</dbReference>
<dbReference type="InterPro" id="IPR043502">
    <property type="entry name" value="DNA/RNA_pol_sf"/>
</dbReference>
<dbReference type="InterPro" id="IPR002589">
    <property type="entry name" value="Macro_dom"/>
</dbReference>
<dbReference type="InterPro" id="IPR043472">
    <property type="entry name" value="Macro_dom-like"/>
</dbReference>
<dbReference type="InterPro" id="IPR044371">
    <property type="entry name" value="Macro_X_NSP3-like"/>
</dbReference>
<dbReference type="InterPro" id="IPR048891">
    <property type="entry name" value="nsP3_ZBD"/>
</dbReference>
<dbReference type="InterPro" id="IPR027417">
    <property type="entry name" value="P-loop_NTPase"/>
</dbReference>
<dbReference type="InterPro" id="IPR001788">
    <property type="entry name" value="RNA-dep_RNA_pol_alsuvir"/>
</dbReference>
<dbReference type="InterPro" id="IPR007094">
    <property type="entry name" value="RNA-dir_pol_PSvirus"/>
</dbReference>
<dbReference type="InterPro" id="IPR029063">
    <property type="entry name" value="SAM-dependent_MTases_sf"/>
</dbReference>
<dbReference type="InterPro" id="IPR047311">
    <property type="entry name" value="Togaviridae_RdRp"/>
</dbReference>
<dbReference type="InterPro" id="IPR049329">
    <property type="entry name" value="ToMV_Hel_N"/>
</dbReference>
<dbReference type="PANTHER" id="PTHR11106">
    <property type="entry name" value="GANGLIOSIDE INDUCED DIFFERENTIATION ASSOCIATED PROTEIN 2-RELATED"/>
    <property type="match status" value="1"/>
</dbReference>
<dbReference type="PANTHER" id="PTHR11106:SF27">
    <property type="entry name" value="MACRO DOMAIN-CONTAINING PROTEIN"/>
    <property type="match status" value="1"/>
</dbReference>
<dbReference type="Pfam" id="PF01661">
    <property type="entry name" value="Macro"/>
    <property type="match status" value="1"/>
</dbReference>
<dbReference type="Pfam" id="PF20852">
    <property type="entry name" value="nsP3_ZBD"/>
    <property type="match status" value="1"/>
</dbReference>
<dbReference type="Pfam" id="PF01707">
    <property type="entry name" value="Peptidase_C9"/>
    <property type="match status" value="1"/>
</dbReference>
<dbReference type="Pfam" id="PF00978">
    <property type="entry name" value="RdRP_2"/>
    <property type="match status" value="1"/>
</dbReference>
<dbReference type="Pfam" id="PF20896">
    <property type="entry name" value="ToMV_Hel_N"/>
    <property type="match status" value="1"/>
</dbReference>
<dbReference type="Pfam" id="PF01443">
    <property type="entry name" value="Viral_helicase1"/>
    <property type="match status" value="1"/>
</dbReference>
<dbReference type="Pfam" id="PF01660">
    <property type="entry name" value="Vmethyltransf"/>
    <property type="match status" value="1"/>
</dbReference>
<dbReference type="SMART" id="SM00506">
    <property type="entry name" value="A1pp"/>
    <property type="match status" value="1"/>
</dbReference>
<dbReference type="SUPFAM" id="SSF56672">
    <property type="entry name" value="DNA/RNA polymerases"/>
    <property type="match status" value="1"/>
</dbReference>
<dbReference type="SUPFAM" id="SSF52949">
    <property type="entry name" value="Macro domain-like"/>
    <property type="match status" value="1"/>
</dbReference>
<dbReference type="SUPFAM" id="SSF52540">
    <property type="entry name" value="P-loop containing nucleoside triphosphate hydrolases"/>
    <property type="match status" value="1"/>
</dbReference>
<dbReference type="PROSITE" id="PS51743">
    <property type="entry name" value="ALPHAVIRUS_MT"/>
    <property type="match status" value="1"/>
</dbReference>
<dbReference type="PROSITE" id="PS51154">
    <property type="entry name" value="MACRO"/>
    <property type="match status" value="1"/>
</dbReference>
<dbReference type="PROSITE" id="PS51520">
    <property type="entry name" value="NSP2PRO"/>
    <property type="match status" value="1"/>
</dbReference>
<dbReference type="PROSITE" id="PS51657">
    <property type="entry name" value="PSRV_HELICASE"/>
    <property type="match status" value="1"/>
</dbReference>
<dbReference type="PROSITE" id="PS50507">
    <property type="entry name" value="RDRP_SSRNA_POS"/>
    <property type="match status" value="1"/>
</dbReference>
<keyword id="KW-0002">3D-structure</keyword>
<keyword id="KW-0067">ATP-binding</keyword>
<keyword id="KW-1262">Eukaryotic host gene expression shutoff by virus</keyword>
<keyword id="KW-1191">Eukaryotic host transcription shutoff by virus</keyword>
<keyword id="KW-0342">GTP-binding</keyword>
<keyword id="KW-0347">Helicase</keyword>
<keyword id="KW-1032">Host cell membrane</keyword>
<keyword id="KW-1034">Host cell projection</keyword>
<keyword id="KW-1035">Host cytoplasm</keyword>
<keyword id="KW-1036">Host cytoplasmic vesicle</keyword>
<keyword id="KW-1190">Host gene expression shutoff by virus</keyword>
<keyword id="KW-1043">Host membrane</keyword>
<keyword id="KW-1048">Host nucleus</keyword>
<keyword id="KW-0945">Host-virus interaction</keyword>
<keyword id="KW-0378">Hydrolase</keyword>
<keyword id="KW-1104">Inhibition of host RNA polymerase II by virus</keyword>
<keyword id="KW-0449">Lipoprotein</keyword>
<keyword id="KW-0472">Membrane</keyword>
<keyword id="KW-0479">Metal-binding</keyword>
<keyword id="KW-0489">Methyltransferase</keyword>
<keyword id="KW-0506">mRNA capping</keyword>
<keyword id="KW-0507">mRNA processing</keyword>
<keyword id="KW-0511">Multifunctional enzyme</keyword>
<keyword id="KW-0547">Nucleotide-binding</keyword>
<keyword id="KW-0548">Nucleotidyltransferase</keyword>
<keyword id="KW-0564">Palmitate</keyword>
<keyword id="KW-0597">Phosphoprotein</keyword>
<keyword id="KW-0645">Protease</keyword>
<keyword id="KW-0677">Repeat</keyword>
<keyword id="KW-1159">RNA suppression of termination</keyword>
<keyword id="KW-0694">RNA-binding</keyword>
<keyword id="KW-0696">RNA-directed RNA polymerase</keyword>
<keyword id="KW-0949">S-adenosyl-L-methionine</keyword>
<keyword id="KW-0788">Thiol protease</keyword>
<keyword id="KW-0808">Transferase</keyword>
<keyword id="KW-0832">Ubl conjugation</keyword>
<keyword id="KW-0693">Viral RNA replication</keyword>
<keyword id="KW-0862">Zinc</keyword>
<organism>
    <name type="scientific">Venezuelan equine encephalitis virus (strain P676)</name>
    <name type="common">VEEV</name>
    <dbReference type="NCBI Taxonomy" id="36385"/>
    <lineage>
        <taxon>Viruses</taxon>
        <taxon>Riboviria</taxon>
        <taxon>Orthornavirae</taxon>
        <taxon>Kitrinoviricota</taxon>
        <taxon>Alsuviricetes</taxon>
        <taxon>Martellivirales</taxon>
        <taxon>Togaviridae</taxon>
        <taxon>Alphavirus</taxon>
        <taxon>Venezuelan equine encephalitis virus</taxon>
    </lineage>
</organism>
<proteinExistence type="evidence at protein level"/>
<reference key="1">
    <citation type="journal article" date="1992" name="Virology">
        <title>Genetic evidence that epizootic Venezuelan equine encephalitis (VEE) viruses may have evolved from enzootic VEE subtype I-D virus.</title>
        <authorList>
            <person name="Kinney R.M."/>
            <person name="Tsuchiya K.R."/>
            <person name="Sneider J.M."/>
            <person name="Trent D.W."/>
        </authorList>
    </citation>
    <scope>NUCLEOTIDE SEQUENCE [GENOMIC RNA]</scope>
</reference>
<reference key="2">
    <citation type="journal article" date="1996" name="Lancet">
        <title>Re-emergence of epidemic Venezuelan equine encephalomyelitis in South America.</title>
        <authorList>
            <person name="Weaver S.C."/>
            <person name="Salas R."/>
            <person name="Rico-Hesse R."/>
            <person name="Ludwig G.V."/>
            <person name="Oberste M.S."/>
            <person name="Boshell J."/>
            <person name="Tesh R.B."/>
        </authorList>
    </citation>
    <scope>NUCLEOTIDE SEQUENCE [GENOMIC RNA]</scope>
    <source>
        <strain>3908</strain>
        <strain>6119</strain>
        <strain>PMCHo5</strain>
        <strain>V198</strain>
    </source>
</reference>
<reference key="3">
    <citation type="journal article" date="2001" name="J. Virol.">
        <title>Potential sources of the 1995 Venezuelan equine encephalitis subtype IC epidemic.</title>
        <authorList>
            <person name="Brault A.C."/>
            <person name="Powers A.M."/>
            <person name="Medina G."/>
            <person name="Wang E."/>
            <person name="Kang W."/>
            <person name="Salas R.A."/>
            <person name="De Siger J."/>
            <person name="Weaver S.C."/>
        </authorList>
    </citation>
    <scope>NUCLEOTIDE SEQUENCE [GENOMIC RNA]</scope>
    <source>
        <strain>P676</strain>
    </source>
</reference>
<reference key="4">
    <citation type="journal article" date="2005" name="Emerg. Infect. Dis.">
        <title>Postepizootic persistence of Venezuelan equine encephalitis virus, Venezuela.</title>
        <authorList>
            <person name="Navarro J.C."/>
            <person name="Medina G."/>
            <person name="Vasquez C."/>
            <person name="Coffey L.L."/>
            <person name="Wang E."/>
            <person name="Suarez A."/>
            <person name="Biord H."/>
            <person name="Salas M."/>
            <person name="Weaver S.C."/>
        </authorList>
    </citation>
    <scope>NUCLEOTIDE SEQUENCE [GENOMIC RNA]</scope>
    <source>
        <strain>254934</strain>
        <strain>255010</strain>
    </source>
</reference>
<reference key="5">
    <citation type="journal article" date="2015" name="J. Virol.">
        <title>mRNA capping by venezuelan equine encephalitis virus nsp1: functional characterization and implications for antiviral research.</title>
        <authorList>
            <person name="Li C."/>
            <person name="Guillen J."/>
            <person name="Rabah N."/>
            <person name="Blanjoie A."/>
            <person name="Debart F."/>
            <person name="Vasseur J.J."/>
            <person name="Canard B."/>
            <person name="Decroly E."/>
            <person name="Coutard B."/>
        </authorList>
    </citation>
    <scope>FUNCTION (MRNA-CAPPING ENZYME NSP1)</scope>
</reference>
<reference evidence="16 17" key="6">
    <citation type="journal article" date="2009" name="J. Virol.">
        <title>The crystal structures of Chikungunya and Venezuelan equine encephalitis virus nsP3 macro domains define a conserved adenosine binding pocket.</title>
        <authorList>
            <person name="Malet H."/>
            <person name="Coutard B."/>
            <person name="Jamal S."/>
            <person name="Dutartre H."/>
            <person name="Papageorgiou N."/>
            <person name="Neuvonen M."/>
            <person name="Ahola T."/>
            <person name="Forrester N."/>
            <person name="Gould E.A."/>
            <person name="Lafitte D."/>
            <person name="Ferron F."/>
            <person name="Lescar J."/>
            <person name="Gorbalenya A.E."/>
            <person name="de Lamballerie X."/>
            <person name="Canard B."/>
        </authorList>
    </citation>
    <scope>X-RAY CRYSTALLOGRAPHY (2.30 ANGSTROMS) OF 1330-1489 IN COMPLEX WITH ADP-RIBOSE</scope>
    <scope>CATALYTIC ACTIVITY</scope>
</reference>
<reference evidence="18 19" key="7">
    <citation type="journal article" date="2015" name="Biomol. NMR. Assign.">
        <title>NMR study of non-structural proteins--part II: (1)H, (13)C, (15)N backbone and side-chain resonance assignment of macro domain from Venezuelan equine encephalitis virus (VEEV).</title>
        <authorList>
            <person name="Makrynitsa G.I."/>
            <person name="Ntonti D."/>
            <person name="Marousis K.D."/>
            <person name="Tsika A.C."/>
            <person name="Lichiere J."/>
            <person name="Papageorgiou N."/>
            <person name="Coutard B."/>
            <person name="Bentrop D."/>
            <person name="Spyroulias G.A."/>
        </authorList>
    </citation>
    <scope>STRUCTURE BY NMR OF 1330-1489</scope>
</reference>